<feature type="transit peptide" description="Mitochondrion" evidence="3">
    <location>
        <begin position="1"/>
        <end position="26"/>
    </location>
</feature>
<feature type="chain" id="PRO_0000261651" description="Large ribosomal subunit protein mL38">
    <location>
        <begin position="27"/>
        <end position="380"/>
    </location>
</feature>
<feature type="coiled-coil region" evidence="2">
    <location>
        <begin position="101"/>
        <end position="122"/>
    </location>
</feature>
<sequence>MAAPWWRVVLNGSRNWRGFSTSAALSRRAAPLGPMPNEDIDVSNLERLKKYRSFDRYRRRAEREARDPHWWRTYREHFGEESDPKDTVDIGLPPPKVCRTQQLLERKRVLRELRTSVEEERASRLRTASIPLEAVRAEWERTCGPYHKQRLAEYYGLYRDLFHGATFVPRVPLHVAYAIGEDDLVPVYYGNEVTPTEAAQPPEVTYEADEGSMWTLLLTNLDGHLLEPDAEYVHWLVTNIPGSRVAEGEETCPYLPPFPARGSGFHRFAFLLFKQDKPVDFSGDTRPSPCYQLAQRTFHTFDFYKKHQDAMTPAGLAFFQCRWDDSVTHIFHQLLDMREPVFEFVRPPPYHPKQKCFPHRQPLRYLDRYRDSHEPTYGFY</sequence>
<organism>
    <name type="scientific">Bos taurus</name>
    <name type="common">Bovine</name>
    <dbReference type="NCBI Taxonomy" id="9913"/>
    <lineage>
        <taxon>Eukaryota</taxon>
        <taxon>Metazoa</taxon>
        <taxon>Chordata</taxon>
        <taxon>Craniata</taxon>
        <taxon>Vertebrata</taxon>
        <taxon>Euteleostomi</taxon>
        <taxon>Mammalia</taxon>
        <taxon>Eutheria</taxon>
        <taxon>Laurasiatheria</taxon>
        <taxon>Artiodactyla</taxon>
        <taxon>Ruminantia</taxon>
        <taxon>Pecora</taxon>
        <taxon>Bovidae</taxon>
        <taxon>Bovinae</taxon>
        <taxon>Bos</taxon>
    </lineage>
</organism>
<reference key="1">
    <citation type="submission" date="2005-08" db="EMBL/GenBank/DDBJ databases">
        <authorList>
            <consortium name="NIH - Mammalian Gene Collection (MGC) project"/>
        </authorList>
    </citation>
    <scope>NUCLEOTIDE SEQUENCE [LARGE SCALE MRNA]</scope>
    <source>
        <strain>Crossbred X Angus</strain>
        <tissue>Ileum</tissue>
    </source>
</reference>
<reference key="2">
    <citation type="journal article" date="1999" name="Biochemistry">
        <title>Identification of mammalian mitochondrial ribosomal proteins (MRPs) by N-terminal sequencing of purified bovine MRPs and comparison to data bank sequences: the large subribosomal particle.</title>
        <authorList>
            <person name="Graack H.R."/>
            <person name="Bryant M.L."/>
            <person name="O'Brien T.W."/>
        </authorList>
    </citation>
    <scope>PROTEIN SEQUENCE OF 27-51</scope>
    <scope>SUBCELLULAR LOCATION</scope>
</reference>
<reference key="3">
    <citation type="journal article" date="2001" name="J. Biol. Chem.">
        <title>The large subunit of the mammalian mitochondrial ribosome. Analysis of the complement of ribosomal proteins present.</title>
        <authorList>
            <person name="Koc E.C."/>
            <person name="Burkhart W."/>
            <person name="Blackburn K."/>
            <person name="Moyer M.B."/>
            <person name="Schlatzer D.M."/>
            <person name="Moseley A."/>
            <person name="Spremulli L.L."/>
        </authorList>
    </citation>
    <scope>IDENTIFICATION BY MASS SPECTROMETRY</scope>
    <scope>SUBCELLULAR LOCATION</scope>
</reference>
<dbReference type="EMBL" id="BC103377">
    <property type="protein sequence ID" value="AAI03378.1"/>
    <property type="status" value="ALT_INIT"/>
    <property type="molecule type" value="mRNA"/>
</dbReference>
<dbReference type="RefSeq" id="NP_001030566.2">
    <property type="nucleotide sequence ID" value="NM_001035489.1"/>
</dbReference>
<dbReference type="SMR" id="Q3ZBF3"/>
<dbReference type="FunCoup" id="Q3ZBF3">
    <property type="interactions" value="2134"/>
</dbReference>
<dbReference type="STRING" id="9913.ENSBTAP00000050302"/>
<dbReference type="PaxDb" id="9913-ENSBTAP00000050302"/>
<dbReference type="GeneID" id="617005"/>
<dbReference type="KEGG" id="bta:617005"/>
<dbReference type="CTD" id="64978"/>
<dbReference type="VEuPathDB" id="HostDB:ENSBTAG00000022009"/>
<dbReference type="eggNOG" id="KOG3346">
    <property type="taxonomic scope" value="Eukaryota"/>
</dbReference>
<dbReference type="HOGENOM" id="CLU_043994_0_0_1"/>
<dbReference type="InParanoid" id="Q3ZBF3"/>
<dbReference type="OMA" id="PQKKFPH"/>
<dbReference type="OrthoDB" id="2153661at2759"/>
<dbReference type="TreeFam" id="TF315074"/>
<dbReference type="Reactome" id="R-BTA-5389840">
    <property type="pathway name" value="Mitochondrial translation elongation"/>
</dbReference>
<dbReference type="Reactome" id="R-BTA-5419276">
    <property type="pathway name" value="Mitochondrial translation termination"/>
</dbReference>
<dbReference type="Proteomes" id="UP000009136">
    <property type="component" value="Chromosome 19"/>
</dbReference>
<dbReference type="Bgee" id="ENSBTAG00000022009">
    <property type="expression patterns" value="Expressed in digestive system secreted substance and 106 other cell types or tissues"/>
</dbReference>
<dbReference type="GO" id="GO:0005743">
    <property type="term" value="C:mitochondrial inner membrane"/>
    <property type="evidence" value="ECO:0000304"/>
    <property type="project" value="Reactome"/>
</dbReference>
<dbReference type="GO" id="GO:0005762">
    <property type="term" value="C:mitochondrial large ribosomal subunit"/>
    <property type="evidence" value="ECO:0000318"/>
    <property type="project" value="GO_Central"/>
</dbReference>
<dbReference type="CDD" id="cd00866">
    <property type="entry name" value="PEBP_euk"/>
    <property type="match status" value="1"/>
</dbReference>
<dbReference type="FunFam" id="3.90.280.10:FF:000002">
    <property type="entry name" value="39S ribosomal protein L38, mitochondrial"/>
    <property type="match status" value="1"/>
</dbReference>
<dbReference type="Gene3D" id="3.90.280.10">
    <property type="entry name" value="PEBP-like"/>
    <property type="match status" value="1"/>
</dbReference>
<dbReference type="InterPro" id="IPR008914">
    <property type="entry name" value="PEBP"/>
</dbReference>
<dbReference type="InterPro" id="IPR036610">
    <property type="entry name" value="PEBP-like_sf"/>
</dbReference>
<dbReference type="InterPro" id="IPR035810">
    <property type="entry name" value="PEBP_euk"/>
</dbReference>
<dbReference type="PANTHER" id="PTHR11362:SF133">
    <property type="entry name" value="LARGE RIBOSOMAL SUBUNIT PROTEIN ML38"/>
    <property type="match status" value="1"/>
</dbReference>
<dbReference type="PANTHER" id="PTHR11362">
    <property type="entry name" value="PHOSPHATIDYLETHANOLAMINE-BINDING PROTEIN"/>
    <property type="match status" value="1"/>
</dbReference>
<dbReference type="Pfam" id="PF01161">
    <property type="entry name" value="PBP"/>
    <property type="match status" value="1"/>
</dbReference>
<dbReference type="SUPFAM" id="SSF49777">
    <property type="entry name" value="PEBP-like"/>
    <property type="match status" value="1"/>
</dbReference>
<evidence type="ECO:0000250" key="1">
    <source>
        <dbReference type="UniProtKB" id="Q96DV4"/>
    </source>
</evidence>
<evidence type="ECO:0000255" key="2"/>
<evidence type="ECO:0000269" key="3">
    <source>
    </source>
</evidence>
<evidence type="ECO:0000269" key="4">
    <source>
    </source>
</evidence>
<evidence type="ECO:0000305" key="5"/>
<comment type="subunit">
    <text evidence="1">Component of the mitochondrial ribosome large subunit (39S) which comprises a 16S rRNA and about 50 distinct proteins.</text>
</comment>
<comment type="subcellular location">
    <subcellularLocation>
        <location evidence="3 4">Mitochondrion</location>
    </subcellularLocation>
</comment>
<comment type="similarity">
    <text evidence="5">Belongs to the phosphatidylethanolamine-binding protein family. Mitochondrion-specific ribosomal protein mL38 subfamily.</text>
</comment>
<comment type="sequence caution" evidence="5">
    <conflict type="erroneous initiation">
        <sequence resource="EMBL-CDS" id="AAI03378"/>
    </conflict>
</comment>
<proteinExistence type="evidence at protein level"/>
<gene>
    <name type="primary">MRPL38</name>
</gene>
<keyword id="KW-0175">Coiled coil</keyword>
<keyword id="KW-0903">Direct protein sequencing</keyword>
<keyword id="KW-0496">Mitochondrion</keyword>
<keyword id="KW-1185">Reference proteome</keyword>
<keyword id="KW-0687">Ribonucleoprotein</keyword>
<keyword id="KW-0689">Ribosomal protein</keyword>
<keyword id="KW-0809">Transit peptide</keyword>
<name>RM38_BOVIN</name>
<protein>
    <recommendedName>
        <fullName evidence="5">Large ribosomal subunit protein mL38</fullName>
    </recommendedName>
    <alternativeName>
        <fullName>39S ribosomal protein L38, mitochondrial</fullName>
        <shortName>L38mt</shortName>
        <shortName>MRP-L38</shortName>
    </alternativeName>
</protein>
<accession>Q3ZBF3</accession>